<evidence type="ECO:0000255" key="1">
    <source>
        <dbReference type="HAMAP-Rule" id="MF_00054"/>
    </source>
</evidence>
<comment type="function">
    <text evidence="1">Catalyzes the GTP-dependent ribosomal translocation step during translation elongation. During this step, the ribosome changes from the pre-translocational (PRE) to the post-translocational (POST) state as the newly formed A-site-bound peptidyl-tRNA and P-site-bound deacylated tRNA move to the P and E sites, respectively. Catalyzes the coordinated movement of the two tRNA molecules, the mRNA and conformational changes in the ribosome.</text>
</comment>
<comment type="subcellular location">
    <subcellularLocation>
        <location evidence="1">Cytoplasm</location>
    </subcellularLocation>
</comment>
<comment type="similarity">
    <text evidence="1">Belongs to the TRAFAC class translation factor GTPase superfamily. Classic translation factor GTPase family. EF-G/EF-2 subfamily.</text>
</comment>
<gene>
    <name evidence="1" type="primary">fusA</name>
</gene>
<reference key="1">
    <citation type="journal article" date="2002" name="Mol. Biol. Evol.">
        <title>Proliferation and deterioration of Rickettsia palindromic elements.</title>
        <authorList>
            <person name="Amiri H."/>
            <person name="Alsmark C.M."/>
            <person name="Andersson S.G.E."/>
        </authorList>
    </citation>
    <scope>NUCLEOTIDE SEQUENCE [GENOMIC DNA]</scope>
</reference>
<name>EFG_RICBE</name>
<proteinExistence type="inferred from homology"/>
<keyword id="KW-0963">Cytoplasm</keyword>
<keyword id="KW-0251">Elongation factor</keyword>
<keyword id="KW-0342">GTP-binding</keyword>
<keyword id="KW-0547">Nucleotide-binding</keyword>
<keyword id="KW-0648">Protein biosynthesis</keyword>
<sequence length="697" mass="77490">MSKKLENIRNIGICAHIDAGKTTTTERILYYTGKSHKIGEVHEGGATMDWMEQEQERGITITSAATTCRWQDKQINIIDTPGHVDFTIEVERSLRVLDGAVAVFDGVAGVEPQSETVWRQADKYNVPRMCFVNKMDRMGADFYRCVDMIKDRLGAKPLVIQLPIGIEENFKGVVDLVKMQAVVWKDESLGAEYSYQEIPDDMKAKAEEYRANLLDMVVELDDKIMEKYLSGEEVTEEEIKKLIRKGTISAAFYPVLCGSAFKNKGVQPLLDAVVDYLPSPIDIATVKGVEVSTGEEKDFPISVSEPFSALAFKIMNDPFVGSLTFIRVYSGKITSGTTVINTVKNKREKIGRMLLMHANNREDVKEASAGDIVALAGLKDTTTGDTLSDEDKKVILERMEFPEPVIELAVEPKSKVDQEKMGLALSRLAAEDPSFRTSTDQETGQTVIKGMGELHLEIIIDRMRREFKVEANIGAPQVAYRETITKACEIDYTHKKQSGGAGQFARVKIIFEPLKDVKDLKEEDKNKSFIFESKIVGGAVPKEYIPGVEKGLNNIRETGVIAGYPMIDFKATLIDGAFHDVDSSVLAFEIAAKAAFREGMPKGNPKLLEPIMKVEVITPDEYMGDVIGDLNSRRGQVQGMEPRGNAQVIKAYVPLAEMFGYVNTLRSLSQGRAQYSMVFNHYDQVPTQVADTIKAKK</sequence>
<feature type="chain" id="PRO_0000091195" description="Elongation factor G">
    <location>
        <begin position="1"/>
        <end position="697"/>
    </location>
</feature>
<feature type="domain" description="tr-type G">
    <location>
        <begin position="6"/>
        <end position="281"/>
    </location>
</feature>
<feature type="binding site" evidence="1">
    <location>
        <begin position="15"/>
        <end position="22"/>
    </location>
    <ligand>
        <name>GTP</name>
        <dbReference type="ChEBI" id="CHEBI:37565"/>
    </ligand>
</feature>
<feature type="binding site" evidence="1">
    <location>
        <begin position="79"/>
        <end position="83"/>
    </location>
    <ligand>
        <name>GTP</name>
        <dbReference type="ChEBI" id="CHEBI:37565"/>
    </ligand>
</feature>
<feature type="binding site" evidence="1">
    <location>
        <begin position="133"/>
        <end position="136"/>
    </location>
    <ligand>
        <name>GTP</name>
        <dbReference type="ChEBI" id="CHEBI:37565"/>
    </ligand>
</feature>
<accession>Q8KTB0</accession>
<dbReference type="EMBL" id="AF502177">
    <property type="protein sequence ID" value="AAM90927.1"/>
    <property type="molecule type" value="Genomic_DNA"/>
</dbReference>
<dbReference type="SMR" id="Q8KTB0"/>
<dbReference type="GO" id="GO:0005737">
    <property type="term" value="C:cytoplasm"/>
    <property type="evidence" value="ECO:0007669"/>
    <property type="project" value="UniProtKB-SubCell"/>
</dbReference>
<dbReference type="GO" id="GO:0005525">
    <property type="term" value="F:GTP binding"/>
    <property type="evidence" value="ECO:0007669"/>
    <property type="project" value="UniProtKB-UniRule"/>
</dbReference>
<dbReference type="GO" id="GO:0003924">
    <property type="term" value="F:GTPase activity"/>
    <property type="evidence" value="ECO:0007669"/>
    <property type="project" value="InterPro"/>
</dbReference>
<dbReference type="GO" id="GO:0003746">
    <property type="term" value="F:translation elongation factor activity"/>
    <property type="evidence" value="ECO:0007669"/>
    <property type="project" value="UniProtKB-UniRule"/>
</dbReference>
<dbReference type="GO" id="GO:0032790">
    <property type="term" value="P:ribosome disassembly"/>
    <property type="evidence" value="ECO:0007669"/>
    <property type="project" value="TreeGrafter"/>
</dbReference>
<dbReference type="CDD" id="cd01886">
    <property type="entry name" value="EF-G"/>
    <property type="match status" value="1"/>
</dbReference>
<dbReference type="CDD" id="cd16262">
    <property type="entry name" value="EFG_III"/>
    <property type="match status" value="1"/>
</dbReference>
<dbReference type="CDD" id="cd01434">
    <property type="entry name" value="EFG_mtEFG1_IV"/>
    <property type="match status" value="1"/>
</dbReference>
<dbReference type="CDD" id="cd03713">
    <property type="entry name" value="EFG_mtEFG_C"/>
    <property type="match status" value="1"/>
</dbReference>
<dbReference type="CDD" id="cd04088">
    <property type="entry name" value="EFG_mtEFG_II"/>
    <property type="match status" value="1"/>
</dbReference>
<dbReference type="FunFam" id="2.40.30.10:FF:000006">
    <property type="entry name" value="Elongation factor G"/>
    <property type="match status" value="1"/>
</dbReference>
<dbReference type="FunFam" id="3.30.230.10:FF:000003">
    <property type="entry name" value="Elongation factor G"/>
    <property type="match status" value="1"/>
</dbReference>
<dbReference type="FunFam" id="3.30.70.240:FF:000001">
    <property type="entry name" value="Elongation factor G"/>
    <property type="match status" value="1"/>
</dbReference>
<dbReference type="FunFam" id="3.30.70.870:FF:000001">
    <property type="entry name" value="Elongation factor G"/>
    <property type="match status" value="1"/>
</dbReference>
<dbReference type="FunFam" id="3.40.50.300:FF:000029">
    <property type="entry name" value="Elongation factor G"/>
    <property type="match status" value="1"/>
</dbReference>
<dbReference type="Gene3D" id="3.30.230.10">
    <property type="match status" value="1"/>
</dbReference>
<dbReference type="Gene3D" id="3.30.70.240">
    <property type="match status" value="1"/>
</dbReference>
<dbReference type="Gene3D" id="3.30.70.870">
    <property type="entry name" value="Elongation Factor G (Translational Gtpase), domain 3"/>
    <property type="match status" value="1"/>
</dbReference>
<dbReference type="Gene3D" id="3.40.50.300">
    <property type="entry name" value="P-loop containing nucleotide triphosphate hydrolases"/>
    <property type="match status" value="1"/>
</dbReference>
<dbReference type="Gene3D" id="2.40.30.10">
    <property type="entry name" value="Translation factors"/>
    <property type="match status" value="1"/>
</dbReference>
<dbReference type="HAMAP" id="MF_00054_B">
    <property type="entry name" value="EF_G_EF_2_B"/>
    <property type="match status" value="1"/>
</dbReference>
<dbReference type="InterPro" id="IPR053905">
    <property type="entry name" value="EF-G-like_DII"/>
</dbReference>
<dbReference type="InterPro" id="IPR041095">
    <property type="entry name" value="EFG_II"/>
</dbReference>
<dbReference type="InterPro" id="IPR009022">
    <property type="entry name" value="EFG_III"/>
</dbReference>
<dbReference type="InterPro" id="IPR035647">
    <property type="entry name" value="EFG_III/V"/>
</dbReference>
<dbReference type="InterPro" id="IPR047872">
    <property type="entry name" value="EFG_IV"/>
</dbReference>
<dbReference type="InterPro" id="IPR035649">
    <property type="entry name" value="EFG_V"/>
</dbReference>
<dbReference type="InterPro" id="IPR000640">
    <property type="entry name" value="EFG_V-like"/>
</dbReference>
<dbReference type="InterPro" id="IPR031157">
    <property type="entry name" value="G_TR_CS"/>
</dbReference>
<dbReference type="InterPro" id="IPR027417">
    <property type="entry name" value="P-loop_NTPase"/>
</dbReference>
<dbReference type="InterPro" id="IPR020568">
    <property type="entry name" value="Ribosomal_Su5_D2-typ_SF"/>
</dbReference>
<dbReference type="InterPro" id="IPR014721">
    <property type="entry name" value="Ribsml_uS5_D2-typ_fold_subgr"/>
</dbReference>
<dbReference type="InterPro" id="IPR005225">
    <property type="entry name" value="Small_GTP-bd"/>
</dbReference>
<dbReference type="InterPro" id="IPR000795">
    <property type="entry name" value="T_Tr_GTP-bd_dom"/>
</dbReference>
<dbReference type="InterPro" id="IPR009000">
    <property type="entry name" value="Transl_B-barrel_sf"/>
</dbReference>
<dbReference type="InterPro" id="IPR004540">
    <property type="entry name" value="Transl_elong_EFG/EF2"/>
</dbReference>
<dbReference type="InterPro" id="IPR005517">
    <property type="entry name" value="Transl_elong_EFG/EF2_IV"/>
</dbReference>
<dbReference type="NCBIfam" id="TIGR00484">
    <property type="entry name" value="EF-G"/>
    <property type="match status" value="1"/>
</dbReference>
<dbReference type="NCBIfam" id="NF009381">
    <property type="entry name" value="PRK12740.1-5"/>
    <property type="match status" value="1"/>
</dbReference>
<dbReference type="NCBIfam" id="TIGR00231">
    <property type="entry name" value="small_GTP"/>
    <property type="match status" value="1"/>
</dbReference>
<dbReference type="PANTHER" id="PTHR43261:SF1">
    <property type="entry name" value="RIBOSOME-RELEASING FACTOR 2, MITOCHONDRIAL"/>
    <property type="match status" value="1"/>
</dbReference>
<dbReference type="PANTHER" id="PTHR43261">
    <property type="entry name" value="TRANSLATION ELONGATION FACTOR G-RELATED"/>
    <property type="match status" value="1"/>
</dbReference>
<dbReference type="Pfam" id="PF22042">
    <property type="entry name" value="EF-G_D2"/>
    <property type="match status" value="1"/>
</dbReference>
<dbReference type="Pfam" id="PF00679">
    <property type="entry name" value="EFG_C"/>
    <property type="match status" value="1"/>
</dbReference>
<dbReference type="Pfam" id="PF14492">
    <property type="entry name" value="EFG_III"/>
    <property type="match status" value="1"/>
</dbReference>
<dbReference type="Pfam" id="PF03764">
    <property type="entry name" value="EFG_IV"/>
    <property type="match status" value="1"/>
</dbReference>
<dbReference type="Pfam" id="PF00009">
    <property type="entry name" value="GTP_EFTU"/>
    <property type="match status" value="1"/>
</dbReference>
<dbReference type="PRINTS" id="PR00315">
    <property type="entry name" value="ELONGATNFCT"/>
</dbReference>
<dbReference type="SMART" id="SM00838">
    <property type="entry name" value="EFG_C"/>
    <property type="match status" value="1"/>
</dbReference>
<dbReference type="SMART" id="SM00889">
    <property type="entry name" value="EFG_IV"/>
    <property type="match status" value="1"/>
</dbReference>
<dbReference type="SUPFAM" id="SSF54980">
    <property type="entry name" value="EF-G C-terminal domain-like"/>
    <property type="match status" value="2"/>
</dbReference>
<dbReference type="SUPFAM" id="SSF52540">
    <property type="entry name" value="P-loop containing nucleoside triphosphate hydrolases"/>
    <property type="match status" value="1"/>
</dbReference>
<dbReference type="SUPFAM" id="SSF54211">
    <property type="entry name" value="Ribosomal protein S5 domain 2-like"/>
    <property type="match status" value="1"/>
</dbReference>
<dbReference type="SUPFAM" id="SSF50447">
    <property type="entry name" value="Translation proteins"/>
    <property type="match status" value="1"/>
</dbReference>
<dbReference type="PROSITE" id="PS00301">
    <property type="entry name" value="G_TR_1"/>
    <property type="match status" value="1"/>
</dbReference>
<dbReference type="PROSITE" id="PS51722">
    <property type="entry name" value="G_TR_2"/>
    <property type="match status" value="1"/>
</dbReference>
<organism>
    <name type="scientific">Rickettsia bellii</name>
    <dbReference type="NCBI Taxonomy" id="33990"/>
    <lineage>
        <taxon>Bacteria</taxon>
        <taxon>Pseudomonadati</taxon>
        <taxon>Pseudomonadota</taxon>
        <taxon>Alphaproteobacteria</taxon>
        <taxon>Rickettsiales</taxon>
        <taxon>Rickettsiaceae</taxon>
        <taxon>Rickettsieae</taxon>
        <taxon>Rickettsia</taxon>
        <taxon>belli group</taxon>
    </lineage>
</organism>
<protein>
    <recommendedName>
        <fullName evidence="1">Elongation factor G</fullName>
        <shortName evidence="1">EF-G</shortName>
    </recommendedName>
</protein>